<reference key="1">
    <citation type="journal article" date="1997" name="J. Bacteriol.">
        <title>Complete genome sequence of Methanobacterium thermoautotrophicum deltaH: functional analysis and comparative genomics.</title>
        <authorList>
            <person name="Smith D.R."/>
            <person name="Doucette-Stamm L.A."/>
            <person name="Deloughery C."/>
            <person name="Lee H.-M."/>
            <person name="Dubois J."/>
            <person name="Aldredge T."/>
            <person name="Bashirzadeh R."/>
            <person name="Blakely D."/>
            <person name="Cook R."/>
            <person name="Gilbert K."/>
            <person name="Harrison D."/>
            <person name="Hoang L."/>
            <person name="Keagle P."/>
            <person name="Lumm W."/>
            <person name="Pothier B."/>
            <person name="Qiu D."/>
            <person name="Spadafora R."/>
            <person name="Vicare R."/>
            <person name="Wang Y."/>
            <person name="Wierzbowski J."/>
            <person name="Gibson R."/>
            <person name="Jiwani N."/>
            <person name="Caruso A."/>
            <person name="Bush D."/>
            <person name="Safer H."/>
            <person name="Patwell D."/>
            <person name="Prabhakar S."/>
            <person name="McDougall S."/>
            <person name="Shimer G."/>
            <person name="Goyal A."/>
            <person name="Pietrovski S."/>
            <person name="Church G.M."/>
            <person name="Daniels C.J."/>
            <person name="Mao J.-I."/>
            <person name="Rice P."/>
            <person name="Noelling J."/>
            <person name="Reeve J.N."/>
        </authorList>
    </citation>
    <scope>NUCLEOTIDE SEQUENCE [LARGE SCALE GENOMIC DNA]</scope>
    <source>
        <strain>ATCC 29096 / DSM 1053 / JCM 10044 / NBRC 100330 / Delta H</strain>
    </source>
</reference>
<proteinExistence type="inferred from homology"/>
<comment type="function">
    <text evidence="1">Required for formate dehydrogenase (FDH) activity. Acts as a sulfur carrier protein that transfers sulfur from IscS to the molybdenum cofactor prior to its insertion into FDH.</text>
</comment>
<comment type="subcellular location">
    <subcellularLocation>
        <location evidence="1">Cytoplasm</location>
    </subcellularLocation>
</comment>
<comment type="similarity">
    <text evidence="1">Belongs to the FdhD family.</text>
</comment>
<gene>
    <name evidence="1" type="primary">fdhD</name>
    <name type="ordered locus">MTH_1547</name>
</gene>
<keyword id="KW-0963">Cytoplasm</keyword>
<keyword id="KW-0501">Molybdenum cofactor biosynthesis</keyword>
<keyword id="KW-1185">Reference proteome</keyword>
<dbReference type="EMBL" id="AE000666">
    <property type="protein sequence ID" value="AAB86021.1"/>
    <property type="molecule type" value="Genomic_DNA"/>
</dbReference>
<dbReference type="PIR" id="D69073">
    <property type="entry name" value="D69073"/>
</dbReference>
<dbReference type="RefSeq" id="WP_010877156.1">
    <property type="nucleotide sequence ID" value="NC_000916.1"/>
</dbReference>
<dbReference type="SMR" id="O27590"/>
<dbReference type="STRING" id="187420.MTH_1547"/>
<dbReference type="PaxDb" id="187420-MTH_1547"/>
<dbReference type="EnsemblBacteria" id="AAB86021">
    <property type="protein sequence ID" value="AAB86021"/>
    <property type="gene ID" value="MTH_1547"/>
</dbReference>
<dbReference type="GeneID" id="1471816"/>
<dbReference type="GeneID" id="77402067"/>
<dbReference type="KEGG" id="mth:MTH_1547"/>
<dbReference type="PATRIC" id="fig|187420.15.peg.1510"/>
<dbReference type="HOGENOM" id="CLU_056887_4_2_2"/>
<dbReference type="InParanoid" id="O27590"/>
<dbReference type="Proteomes" id="UP000005223">
    <property type="component" value="Chromosome"/>
</dbReference>
<dbReference type="GO" id="GO:0005737">
    <property type="term" value="C:cytoplasm"/>
    <property type="evidence" value="ECO:0007669"/>
    <property type="project" value="UniProtKB-SubCell"/>
</dbReference>
<dbReference type="GO" id="GO:0097163">
    <property type="term" value="F:sulfur carrier activity"/>
    <property type="evidence" value="ECO:0007669"/>
    <property type="project" value="UniProtKB-UniRule"/>
</dbReference>
<dbReference type="GO" id="GO:0016783">
    <property type="term" value="F:sulfurtransferase activity"/>
    <property type="evidence" value="ECO:0007669"/>
    <property type="project" value="InterPro"/>
</dbReference>
<dbReference type="GO" id="GO:0006777">
    <property type="term" value="P:Mo-molybdopterin cofactor biosynthetic process"/>
    <property type="evidence" value="ECO:0007669"/>
    <property type="project" value="UniProtKB-UniRule"/>
</dbReference>
<dbReference type="Gene3D" id="3.10.20.10">
    <property type="match status" value="1"/>
</dbReference>
<dbReference type="Gene3D" id="3.40.140.10">
    <property type="entry name" value="Cytidine Deaminase, domain 2"/>
    <property type="match status" value="1"/>
</dbReference>
<dbReference type="HAMAP" id="MF_00187">
    <property type="entry name" value="FdhD"/>
    <property type="match status" value="1"/>
</dbReference>
<dbReference type="InterPro" id="IPR016193">
    <property type="entry name" value="Cytidine_deaminase-like"/>
</dbReference>
<dbReference type="InterPro" id="IPR003786">
    <property type="entry name" value="FdhD"/>
</dbReference>
<dbReference type="NCBIfam" id="TIGR00129">
    <property type="entry name" value="fdhD_narQ"/>
    <property type="match status" value="1"/>
</dbReference>
<dbReference type="PANTHER" id="PTHR30592">
    <property type="entry name" value="FORMATE DEHYDROGENASE"/>
    <property type="match status" value="1"/>
</dbReference>
<dbReference type="PANTHER" id="PTHR30592:SF1">
    <property type="entry name" value="SULFUR CARRIER PROTEIN FDHD"/>
    <property type="match status" value="1"/>
</dbReference>
<dbReference type="Pfam" id="PF02634">
    <property type="entry name" value="FdhD-NarQ"/>
    <property type="match status" value="1"/>
</dbReference>
<dbReference type="PIRSF" id="PIRSF015626">
    <property type="entry name" value="FdhD"/>
    <property type="match status" value="1"/>
</dbReference>
<dbReference type="SUPFAM" id="SSF53927">
    <property type="entry name" value="Cytidine deaminase-like"/>
    <property type="match status" value="1"/>
</dbReference>
<organism>
    <name type="scientific">Methanothermobacter thermautotrophicus (strain ATCC 29096 / DSM 1053 / JCM 10044 / NBRC 100330 / Delta H)</name>
    <name type="common">Methanobacterium thermoautotrophicum</name>
    <dbReference type="NCBI Taxonomy" id="187420"/>
    <lineage>
        <taxon>Archaea</taxon>
        <taxon>Methanobacteriati</taxon>
        <taxon>Methanobacteriota</taxon>
        <taxon>Methanomada group</taxon>
        <taxon>Methanobacteria</taxon>
        <taxon>Methanobacteriales</taxon>
        <taxon>Methanobacteriaceae</taxon>
        <taxon>Methanothermobacter</taxon>
    </lineage>
</organism>
<accession>O27590</accession>
<evidence type="ECO:0000255" key="1">
    <source>
        <dbReference type="HAMAP-Rule" id="MF_00187"/>
    </source>
</evidence>
<feature type="chain" id="PRO_0000152937" description="Sulfur carrier protein FdhD">
    <location>
        <begin position="1"/>
        <end position="248"/>
    </location>
</feature>
<feature type="active site" description="Cysteine persulfide intermediate" evidence="1">
    <location>
        <position position="99"/>
    </location>
</feature>
<feature type="binding site" evidence="1">
    <location>
        <begin position="232"/>
        <end position="237"/>
    </location>
    <ligand>
        <name>Mo-bis(molybdopterin guanine dinucleotide)</name>
        <dbReference type="ChEBI" id="CHEBI:60539"/>
    </ligand>
</feature>
<sequence length="248" mass="27566">MSLYREVDAFRVDDERRRVPEKVVNDIEVRIRINGGMEQRFTASPQALEEFATGYLLGEGLVDSVDDIVSIEISDNIIDAEIESGDLDIRRELVMGSDCFGGWRQRVEMVGPVDSDLRVRADDIFLAFKRMVKSAVVWRMTGGTHVAALVTGDEFRVFEDVSRHVAVDKVIGSGAMDGVNFRESFIVYSGRMPADMLIKVVRAGVPIIASNAAPTSSGYDAAQRTGLTMLGFVRGKRFNIYSHPERII</sequence>
<name>FDHD_METTH</name>
<protein>
    <recommendedName>
        <fullName evidence="1">Sulfur carrier protein FdhD</fullName>
    </recommendedName>
</protein>